<proteinExistence type="inferred from homology"/>
<accession>C3PMC3</accession>
<reference key="1">
    <citation type="journal article" date="2009" name="BMC Genomics">
        <title>Analysis of the Rickettsia africae genome reveals that virulence acquisition in Rickettsia species may be explained by genome reduction.</title>
        <authorList>
            <person name="Fournier P.-E."/>
            <person name="El Karkouri K."/>
            <person name="Leroy Q."/>
            <person name="Robert C."/>
            <person name="Giumelli B."/>
            <person name="Renesto P."/>
            <person name="Socolovschi C."/>
            <person name="Parola P."/>
            <person name="Audic S."/>
            <person name="Raoult D."/>
        </authorList>
    </citation>
    <scope>NUCLEOTIDE SEQUENCE [LARGE SCALE GENOMIC DNA]</scope>
    <source>
        <strain>ESF-5</strain>
    </source>
</reference>
<keyword id="KW-0963">Cytoplasm</keyword>
<keyword id="KW-0251">Elongation factor</keyword>
<keyword id="KW-0648">Protein biosynthesis</keyword>
<feature type="chain" id="PRO_1000202251" description="Elongation factor Ts">
    <location>
        <begin position="1"/>
        <end position="309"/>
    </location>
</feature>
<feature type="region of interest" description="Involved in Mg(2+) ion dislocation from EF-Tu" evidence="1">
    <location>
        <begin position="82"/>
        <end position="85"/>
    </location>
</feature>
<dbReference type="EMBL" id="CP001612">
    <property type="protein sequence ID" value="ACP53083.1"/>
    <property type="molecule type" value="Genomic_DNA"/>
</dbReference>
<dbReference type="RefSeq" id="WP_012719375.1">
    <property type="nucleotide sequence ID" value="NC_012633.1"/>
</dbReference>
<dbReference type="SMR" id="C3PMC3"/>
<dbReference type="KEGG" id="raf:RAF_ORF0108"/>
<dbReference type="HOGENOM" id="CLU_047155_2_0_5"/>
<dbReference type="Proteomes" id="UP000002305">
    <property type="component" value="Chromosome"/>
</dbReference>
<dbReference type="GO" id="GO:0005737">
    <property type="term" value="C:cytoplasm"/>
    <property type="evidence" value="ECO:0007669"/>
    <property type="project" value="UniProtKB-SubCell"/>
</dbReference>
<dbReference type="GO" id="GO:0003746">
    <property type="term" value="F:translation elongation factor activity"/>
    <property type="evidence" value="ECO:0007669"/>
    <property type="project" value="UniProtKB-UniRule"/>
</dbReference>
<dbReference type="CDD" id="cd14275">
    <property type="entry name" value="UBA_EF-Ts"/>
    <property type="match status" value="1"/>
</dbReference>
<dbReference type="FunFam" id="1.10.286.20:FF:000001">
    <property type="entry name" value="Elongation factor Ts"/>
    <property type="match status" value="1"/>
</dbReference>
<dbReference type="FunFam" id="1.10.8.10:FF:000001">
    <property type="entry name" value="Elongation factor Ts"/>
    <property type="match status" value="1"/>
</dbReference>
<dbReference type="Gene3D" id="1.10.286.20">
    <property type="match status" value="1"/>
</dbReference>
<dbReference type="Gene3D" id="1.10.8.10">
    <property type="entry name" value="DNA helicase RuvA subunit, C-terminal domain"/>
    <property type="match status" value="1"/>
</dbReference>
<dbReference type="Gene3D" id="3.30.479.20">
    <property type="entry name" value="Elongation factor Ts, dimerisation domain"/>
    <property type="match status" value="2"/>
</dbReference>
<dbReference type="HAMAP" id="MF_00050">
    <property type="entry name" value="EF_Ts"/>
    <property type="match status" value="1"/>
</dbReference>
<dbReference type="InterPro" id="IPR036402">
    <property type="entry name" value="EF-Ts_dimer_sf"/>
</dbReference>
<dbReference type="InterPro" id="IPR001816">
    <property type="entry name" value="Transl_elong_EFTs/EF1B"/>
</dbReference>
<dbReference type="InterPro" id="IPR014039">
    <property type="entry name" value="Transl_elong_EFTs/EF1B_dimer"/>
</dbReference>
<dbReference type="InterPro" id="IPR018101">
    <property type="entry name" value="Transl_elong_Ts_CS"/>
</dbReference>
<dbReference type="InterPro" id="IPR009060">
    <property type="entry name" value="UBA-like_sf"/>
</dbReference>
<dbReference type="NCBIfam" id="TIGR00116">
    <property type="entry name" value="tsf"/>
    <property type="match status" value="1"/>
</dbReference>
<dbReference type="PANTHER" id="PTHR11741">
    <property type="entry name" value="ELONGATION FACTOR TS"/>
    <property type="match status" value="1"/>
</dbReference>
<dbReference type="PANTHER" id="PTHR11741:SF0">
    <property type="entry name" value="ELONGATION FACTOR TS, MITOCHONDRIAL"/>
    <property type="match status" value="1"/>
</dbReference>
<dbReference type="Pfam" id="PF00889">
    <property type="entry name" value="EF_TS"/>
    <property type="match status" value="1"/>
</dbReference>
<dbReference type="SUPFAM" id="SSF54713">
    <property type="entry name" value="Elongation factor Ts (EF-Ts), dimerisation domain"/>
    <property type="match status" value="2"/>
</dbReference>
<dbReference type="SUPFAM" id="SSF46934">
    <property type="entry name" value="UBA-like"/>
    <property type="match status" value="1"/>
</dbReference>
<dbReference type="PROSITE" id="PS01126">
    <property type="entry name" value="EF_TS_1"/>
    <property type="match status" value="1"/>
</dbReference>
<dbReference type="PROSITE" id="PS01127">
    <property type="entry name" value="EF_TS_2"/>
    <property type="match status" value="1"/>
</dbReference>
<evidence type="ECO:0000255" key="1">
    <source>
        <dbReference type="HAMAP-Rule" id="MF_00050"/>
    </source>
</evidence>
<comment type="function">
    <text evidence="1">Associates with the EF-Tu.GDP complex and induces the exchange of GDP to GTP. It remains bound to the aminoacyl-tRNA.EF-Tu.GTP complex up to the GTP hydrolysis stage on the ribosome.</text>
</comment>
<comment type="subcellular location">
    <subcellularLocation>
        <location evidence="1">Cytoplasm</location>
    </subcellularLocation>
</comment>
<comment type="similarity">
    <text evidence="1">Belongs to the EF-Ts family.</text>
</comment>
<sequence>MSEINISAVAVKELREKTGAGMMDCKKALIETSGNFEEAIDFLRKKGLAAAAKKAGRIASEGLTAAKVDGLTGVVIEVNSETDFVARNEQFQDLVKDIANLAVIAKTIDTLKTFKMQSGKSVEEEIIENIATIGENLTLRRMDILEISEGAIGSYVHNEVVPNLGKISVLVGLASNAKDKAKLEALAKQIAVHVAGNNPQSIDDSSLDQALVERERKVFFEKSKEEGKPDNIIAKMVEGRIRKFFSEVVLLQQNFLFEPKLTVAEVIKNAEKELGAEIKIAKFIRYELGEGIEHEEKNFADEVAAITQG</sequence>
<organism>
    <name type="scientific">Rickettsia africae (strain ESF-5)</name>
    <dbReference type="NCBI Taxonomy" id="347255"/>
    <lineage>
        <taxon>Bacteria</taxon>
        <taxon>Pseudomonadati</taxon>
        <taxon>Pseudomonadota</taxon>
        <taxon>Alphaproteobacteria</taxon>
        <taxon>Rickettsiales</taxon>
        <taxon>Rickettsiaceae</taxon>
        <taxon>Rickettsieae</taxon>
        <taxon>Rickettsia</taxon>
        <taxon>spotted fever group</taxon>
    </lineage>
</organism>
<name>EFTS_RICAE</name>
<gene>
    <name evidence="1" type="primary">tsf</name>
    <name type="ordered locus">RAF_ORF0108</name>
</gene>
<protein>
    <recommendedName>
        <fullName evidence="1">Elongation factor Ts</fullName>
        <shortName evidence="1">EF-Ts</shortName>
    </recommendedName>
</protein>